<protein>
    <recommendedName>
        <fullName evidence="1">Crotonobetainyl-CoA reductase</fullName>
        <ecNumber evidence="1">1.3.8.13</ecNumber>
    </recommendedName>
    <alternativeName>
        <fullName evidence="1">Crotonobetainyl-CoA dehydrogenase</fullName>
    </alternativeName>
</protein>
<dbReference type="EC" id="1.3.8.13" evidence="1"/>
<dbReference type="EMBL" id="CP000034">
    <property type="protein sequence ID" value="ABB60299.1"/>
    <property type="molecule type" value="Genomic_DNA"/>
</dbReference>
<dbReference type="RefSeq" id="WP_000347117.1">
    <property type="nucleotide sequence ID" value="NC_007606.1"/>
</dbReference>
<dbReference type="RefSeq" id="YP_401788.1">
    <property type="nucleotide sequence ID" value="NC_007606.1"/>
</dbReference>
<dbReference type="SMR" id="Q32K58"/>
<dbReference type="STRING" id="300267.SDY_0061"/>
<dbReference type="EnsemblBacteria" id="ABB60299">
    <property type="protein sequence ID" value="ABB60299"/>
    <property type="gene ID" value="SDY_0061"/>
</dbReference>
<dbReference type="GeneID" id="93777396"/>
<dbReference type="KEGG" id="sdy:SDY_0061"/>
<dbReference type="PATRIC" id="fig|300267.13.peg.67"/>
<dbReference type="HOGENOM" id="CLU_018204_0_2_6"/>
<dbReference type="UniPathway" id="UPA00117"/>
<dbReference type="Proteomes" id="UP000002716">
    <property type="component" value="Chromosome"/>
</dbReference>
<dbReference type="GO" id="GO:0005737">
    <property type="term" value="C:cytoplasm"/>
    <property type="evidence" value="ECO:0007669"/>
    <property type="project" value="UniProtKB-SubCell"/>
</dbReference>
<dbReference type="GO" id="GO:0003995">
    <property type="term" value="F:acyl-CoA dehydrogenase activity"/>
    <property type="evidence" value="ECO:0007669"/>
    <property type="project" value="InterPro"/>
</dbReference>
<dbReference type="GO" id="GO:0050660">
    <property type="term" value="F:flavin adenine dinucleotide binding"/>
    <property type="evidence" value="ECO:0007669"/>
    <property type="project" value="InterPro"/>
</dbReference>
<dbReference type="GO" id="GO:0009437">
    <property type="term" value="P:carnitine metabolic process"/>
    <property type="evidence" value="ECO:0007669"/>
    <property type="project" value="UniProtKB-UniRule"/>
</dbReference>
<dbReference type="CDD" id="cd00567">
    <property type="entry name" value="ACAD"/>
    <property type="match status" value="1"/>
</dbReference>
<dbReference type="FunFam" id="1.20.140.10:FF:000001">
    <property type="entry name" value="Acyl-CoA dehydrogenase"/>
    <property type="match status" value="1"/>
</dbReference>
<dbReference type="FunFam" id="2.40.110.10:FF:000002">
    <property type="entry name" value="Acyl-CoA dehydrogenase fadE12"/>
    <property type="match status" value="1"/>
</dbReference>
<dbReference type="FunFam" id="1.10.540.10:FF:000005">
    <property type="entry name" value="Crotonobetainyl-CoA reductase"/>
    <property type="match status" value="1"/>
</dbReference>
<dbReference type="Gene3D" id="1.10.540.10">
    <property type="entry name" value="Acyl-CoA dehydrogenase/oxidase, N-terminal domain"/>
    <property type="match status" value="1"/>
</dbReference>
<dbReference type="Gene3D" id="2.40.110.10">
    <property type="entry name" value="Butyryl-CoA Dehydrogenase, subunit A, domain 2"/>
    <property type="match status" value="1"/>
</dbReference>
<dbReference type="Gene3D" id="1.20.140.10">
    <property type="entry name" value="Butyryl-CoA Dehydrogenase, subunit A, domain 3"/>
    <property type="match status" value="1"/>
</dbReference>
<dbReference type="HAMAP" id="MF_01052">
    <property type="entry name" value="CaiA"/>
    <property type="match status" value="1"/>
</dbReference>
<dbReference type="InterPro" id="IPR006089">
    <property type="entry name" value="Acyl-CoA_DH_CS"/>
</dbReference>
<dbReference type="InterPro" id="IPR006091">
    <property type="entry name" value="Acyl-CoA_Oxase/DH_mid-dom"/>
</dbReference>
<dbReference type="InterPro" id="IPR046373">
    <property type="entry name" value="Acyl-CoA_Oxase/DH_mid-dom_sf"/>
</dbReference>
<dbReference type="InterPro" id="IPR036250">
    <property type="entry name" value="AcylCo_DH-like_C"/>
</dbReference>
<dbReference type="InterPro" id="IPR009075">
    <property type="entry name" value="AcylCo_DH/oxidase_C"/>
</dbReference>
<dbReference type="InterPro" id="IPR013786">
    <property type="entry name" value="AcylCoA_DH/ox_N"/>
</dbReference>
<dbReference type="InterPro" id="IPR037069">
    <property type="entry name" value="AcylCoA_DH/ox_N_sf"/>
</dbReference>
<dbReference type="InterPro" id="IPR009100">
    <property type="entry name" value="AcylCoA_DH/oxidase_NM_dom_sf"/>
</dbReference>
<dbReference type="InterPro" id="IPR023450">
    <property type="entry name" value="CaiA"/>
</dbReference>
<dbReference type="NCBIfam" id="NF002885">
    <property type="entry name" value="PRK03354.1"/>
    <property type="match status" value="1"/>
</dbReference>
<dbReference type="PANTHER" id="PTHR43884">
    <property type="entry name" value="ACYL-COA DEHYDROGENASE"/>
    <property type="match status" value="1"/>
</dbReference>
<dbReference type="PANTHER" id="PTHR43884:SF12">
    <property type="entry name" value="ISOVALERYL-COA DEHYDROGENASE, MITOCHONDRIAL-RELATED"/>
    <property type="match status" value="1"/>
</dbReference>
<dbReference type="Pfam" id="PF00441">
    <property type="entry name" value="Acyl-CoA_dh_1"/>
    <property type="match status" value="1"/>
</dbReference>
<dbReference type="Pfam" id="PF02770">
    <property type="entry name" value="Acyl-CoA_dh_M"/>
    <property type="match status" value="1"/>
</dbReference>
<dbReference type="Pfam" id="PF02771">
    <property type="entry name" value="Acyl-CoA_dh_N"/>
    <property type="match status" value="1"/>
</dbReference>
<dbReference type="PIRSF" id="PIRSF016578">
    <property type="entry name" value="HsaA"/>
    <property type="match status" value="1"/>
</dbReference>
<dbReference type="SUPFAM" id="SSF47203">
    <property type="entry name" value="Acyl-CoA dehydrogenase C-terminal domain-like"/>
    <property type="match status" value="1"/>
</dbReference>
<dbReference type="SUPFAM" id="SSF56645">
    <property type="entry name" value="Acyl-CoA dehydrogenase NM domain-like"/>
    <property type="match status" value="1"/>
</dbReference>
<dbReference type="PROSITE" id="PS00072">
    <property type="entry name" value="ACYL_COA_DH_1"/>
    <property type="match status" value="1"/>
</dbReference>
<dbReference type="PROSITE" id="PS00073">
    <property type="entry name" value="ACYL_COA_DH_2"/>
    <property type="match status" value="1"/>
</dbReference>
<comment type="function">
    <text evidence="1">Catalyzes the reduction of crotonobetainyl-CoA to gamma-butyrobetainyl-CoA.</text>
</comment>
<comment type="catalytic activity">
    <reaction evidence="1">
        <text>4-(trimethylamino)butanoyl-CoA + oxidized [electron-transfer flavoprotein] + H(+) = crotonobetainyl-CoA + reduced [electron-transfer flavoprotein]</text>
        <dbReference type="Rhea" id="RHEA:51584"/>
        <dbReference type="Rhea" id="RHEA-COMP:10685"/>
        <dbReference type="Rhea" id="RHEA-COMP:10686"/>
        <dbReference type="ChEBI" id="CHEBI:15378"/>
        <dbReference type="ChEBI" id="CHEBI:57692"/>
        <dbReference type="ChEBI" id="CHEBI:58307"/>
        <dbReference type="ChEBI" id="CHEBI:60933"/>
        <dbReference type="ChEBI" id="CHEBI:61513"/>
        <dbReference type="EC" id="1.3.8.13"/>
    </reaction>
</comment>
<comment type="cofactor">
    <cofactor evidence="1">
        <name>FAD</name>
        <dbReference type="ChEBI" id="CHEBI:57692"/>
    </cofactor>
</comment>
<comment type="pathway">
    <text evidence="1">Amine and polyamine metabolism; carnitine metabolism.</text>
</comment>
<comment type="subunit">
    <text evidence="1">Homotetramer.</text>
</comment>
<comment type="subcellular location">
    <subcellularLocation>
        <location evidence="1">Cytoplasm</location>
    </subcellularLocation>
</comment>
<comment type="similarity">
    <text evidence="1">Belongs to the acyl-CoA dehydrogenase family.</text>
</comment>
<gene>
    <name evidence="1" type="primary">caiA</name>
    <name type="ordered locus">SDY_0061</name>
</gene>
<reference key="1">
    <citation type="journal article" date="2005" name="Nucleic Acids Res.">
        <title>Genome dynamics and diversity of Shigella species, the etiologic agents of bacillary dysentery.</title>
        <authorList>
            <person name="Yang F."/>
            <person name="Yang J."/>
            <person name="Zhang X."/>
            <person name="Chen L."/>
            <person name="Jiang Y."/>
            <person name="Yan Y."/>
            <person name="Tang X."/>
            <person name="Wang J."/>
            <person name="Xiong Z."/>
            <person name="Dong J."/>
            <person name="Xue Y."/>
            <person name="Zhu Y."/>
            <person name="Xu X."/>
            <person name="Sun L."/>
            <person name="Chen S."/>
            <person name="Nie H."/>
            <person name="Peng J."/>
            <person name="Xu J."/>
            <person name="Wang Y."/>
            <person name="Yuan Z."/>
            <person name="Wen Y."/>
            <person name="Yao Z."/>
            <person name="Shen Y."/>
            <person name="Qiang B."/>
            <person name="Hou Y."/>
            <person name="Yu J."/>
            <person name="Jin Q."/>
        </authorList>
    </citation>
    <scope>NUCLEOTIDE SEQUENCE [LARGE SCALE GENOMIC DNA]</scope>
    <source>
        <strain>Sd197</strain>
    </source>
</reference>
<feature type="chain" id="PRO_1000064352" description="Crotonobetainyl-CoA reductase">
    <location>
        <begin position="1"/>
        <end position="380"/>
    </location>
</feature>
<name>CAIA_SHIDS</name>
<proteinExistence type="inferred from homology"/>
<organism>
    <name type="scientific">Shigella dysenteriae serotype 1 (strain Sd197)</name>
    <dbReference type="NCBI Taxonomy" id="300267"/>
    <lineage>
        <taxon>Bacteria</taxon>
        <taxon>Pseudomonadati</taxon>
        <taxon>Pseudomonadota</taxon>
        <taxon>Gammaproteobacteria</taxon>
        <taxon>Enterobacterales</taxon>
        <taxon>Enterobacteriaceae</taxon>
        <taxon>Shigella</taxon>
    </lineage>
</organism>
<sequence>MDFNLNDEQELFVAGIRELMASENWEAYFAECDRDSVYPERFVKALADMGIDSLLIPEEHGGLDAGFVTLAAVWMELGRLGAPTYVLYQLPGGFNTFLREGTQEQIDKIMAFRGTGKQMWNSAITEPGAGSDVGSLKTTYTRRNGKIYLNGSKCFITSSAYTPYIVVMARDGASPDKPVYTEWFVDMSKPGIKVTKLEKLGLRMDSCCEITFDDVELDEKDMFGREGNGFNRVKEEFDHERFLVALTNYGTAMCAFEDAARYANQRVQFGEAIGRFQLIQEKFAHMAIKLNSMKNMLYEAAWKADNGTITSGDAAMCKYFCANAAFEVVDSAMQVLGGVGIAGNHRISRFWRDLRVDRVSGGSDEMQILTLGRAVLKQYR</sequence>
<keyword id="KW-0963">Cytoplasm</keyword>
<keyword id="KW-0274">FAD</keyword>
<keyword id="KW-0285">Flavoprotein</keyword>
<keyword id="KW-0560">Oxidoreductase</keyword>
<keyword id="KW-1185">Reference proteome</keyword>
<evidence type="ECO:0000255" key="1">
    <source>
        <dbReference type="HAMAP-Rule" id="MF_01052"/>
    </source>
</evidence>
<accession>Q32K58</accession>